<reference key="1">
    <citation type="journal article" date="2005" name="Proc. Natl. Acad. Sci. U.S.A.">
        <title>The complete genome sequence of Mycobacterium avium subspecies paratuberculosis.</title>
        <authorList>
            <person name="Li L."/>
            <person name="Bannantine J.P."/>
            <person name="Zhang Q."/>
            <person name="Amonsin A."/>
            <person name="May B.J."/>
            <person name="Alt D."/>
            <person name="Banerji N."/>
            <person name="Kanjilal S."/>
            <person name="Kapur V."/>
        </authorList>
    </citation>
    <scope>NUCLEOTIDE SEQUENCE [LARGE SCALE GENOMIC DNA]</scope>
    <source>
        <strain>ATCC BAA-968 / K-10</strain>
    </source>
</reference>
<name>MEND_MYCPA</name>
<proteinExistence type="inferred from homology"/>
<sequence length="545" mass="56722">MNPSTTQARVVVDELIRGGVRDVVLCPGSRNAPLAFALADADRAGRIRLHVRIDERTAGYLAIGLAIAAGAPVCVAMTSGTAVANLGPAVVEANYARVPLIVLSANRPYELLGTGANQTMEQLGYFGTQVRAAISLGLAEDAPERLDALNATWRSATCRVLAAATGSRTANAGPVQFDIPLREPLVPDPEPHGAPTPAGRPGGRPWTYTPPVSFDQPLDIDLSPDTVVIAGHGAGTHPNLAQLPTVAEPTAPAPDNPLHPLALRLLRPKQVIMLGRPTLHRPVSALLADPQVPVYALTTGPRWPDVSGNSQATGTRAVTTGAPSPAWLHRCEQANRHAVAAVRGQLAAHPLTTGLHVAAAVADALRPGDQLVLGASNPVRDAALVGLDSHHIRVRSNRGVAGIDGTVSTAIGAALAHEAAHDGRTVALIGDLTFVHDSSGLLIGPTEPTPRRLTIVVSNDNGGGIFELLEQGDPRFSDVSSRVFGTPHDVDVGALCRAYHVESAQIEVGELAAALDEPGPGMRVLEVKADRSSLRQLHAAIKAAL</sequence>
<keyword id="KW-0460">Magnesium</keyword>
<keyword id="KW-0464">Manganese</keyword>
<keyword id="KW-0474">Menaquinone biosynthesis</keyword>
<keyword id="KW-0479">Metal-binding</keyword>
<keyword id="KW-1185">Reference proteome</keyword>
<keyword id="KW-0786">Thiamine pyrophosphate</keyword>
<keyword id="KW-0808">Transferase</keyword>
<protein>
    <recommendedName>
        <fullName evidence="1">2-succinyl-5-enolpyruvyl-6-hydroxy-3-cyclohexene-1-carboxylate synthase</fullName>
        <shortName evidence="1">SEPHCHC synthase</shortName>
        <ecNumber evidence="1">2.2.1.9</ecNumber>
    </recommendedName>
    <alternativeName>
        <fullName evidence="1">Menaquinone biosynthesis protein MenD</fullName>
    </alternativeName>
</protein>
<feature type="chain" id="PRO_0000341779" description="2-succinyl-5-enolpyruvyl-6-hydroxy-3-cyclohexene-1-carboxylate synthase">
    <location>
        <begin position="1"/>
        <end position="545"/>
    </location>
</feature>
<feature type="region of interest" description="Disordered" evidence="2">
    <location>
        <begin position="184"/>
        <end position="209"/>
    </location>
</feature>
<feature type="compositionally biased region" description="Low complexity" evidence="2">
    <location>
        <begin position="195"/>
        <end position="205"/>
    </location>
</feature>
<accession>Q73SM1</accession>
<evidence type="ECO:0000255" key="1">
    <source>
        <dbReference type="HAMAP-Rule" id="MF_01659"/>
    </source>
</evidence>
<evidence type="ECO:0000256" key="2">
    <source>
        <dbReference type="SAM" id="MobiDB-lite"/>
    </source>
</evidence>
<dbReference type="EC" id="2.2.1.9" evidence="1"/>
<dbReference type="EMBL" id="AE016958">
    <property type="protein sequence ID" value="AAS06602.1"/>
    <property type="molecule type" value="Genomic_DNA"/>
</dbReference>
<dbReference type="RefSeq" id="WP_003879350.1">
    <property type="nucleotide sequence ID" value="NZ_CP106873.1"/>
</dbReference>
<dbReference type="SMR" id="Q73SM1"/>
<dbReference type="STRING" id="262316.MAP_4052"/>
<dbReference type="GeneID" id="75272112"/>
<dbReference type="KEGG" id="mpa:MAP_4052"/>
<dbReference type="eggNOG" id="COG1165">
    <property type="taxonomic scope" value="Bacteria"/>
</dbReference>
<dbReference type="HOGENOM" id="CLU_006051_4_1_11"/>
<dbReference type="UniPathway" id="UPA00079"/>
<dbReference type="UniPathway" id="UPA01057">
    <property type="reaction ID" value="UER00164"/>
</dbReference>
<dbReference type="Proteomes" id="UP000000580">
    <property type="component" value="Chromosome"/>
</dbReference>
<dbReference type="GO" id="GO:0070204">
    <property type="term" value="F:2-succinyl-5-enolpyruvyl-6-hydroxy-3-cyclohexene-1-carboxylic-acid synthase activity"/>
    <property type="evidence" value="ECO:0007669"/>
    <property type="project" value="UniProtKB-UniRule"/>
</dbReference>
<dbReference type="GO" id="GO:0000287">
    <property type="term" value="F:magnesium ion binding"/>
    <property type="evidence" value="ECO:0007669"/>
    <property type="project" value="UniProtKB-UniRule"/>
</dbReference>
<dbReference type="GO" id="GO:0030145">
    <property type="term" value="F:manganese ion binding"/>
    <property type="evidence" value="ECO:0007669"/>
    <property type="project" value="UniProtKB-UniRule"/>
</dbReference>
<dbReference type="GO" id="GO:0030976">
    <property type="term" value="F:thiamine pyrophosphate binding"/>
    <property type="evidence" value="ECO:0007669"/>
    <property type="project" value="UniProtKB-UniRule"/>
</dbReference>
<dbReference type="GO" id="GO:0009234">
    <property type="term" value="P:menaquinone biosynthetic process"/>
    <property type="evidence" value="ECO:0007669"/>
    <property type="project" value="UniProtKB-UniRule"/>
</dbReference>
<dbReference type="CDD" id="cd07037">
    <property type="entry name" value="TPP_PYR_MenD"/>
    <property type="match status" value="1"/>
</dbReference>
<dbReference type="CDD" id="cd02009">
    <property type="entry name" value="TPP_SHCHC_synthase"/>
    <property type="match status" value="1"/>
</dbReference>
<dbReference type="FunFam" id="3.40.50.970:FF:000066">
    <property type="entry name" value="2-succinyl-5-enolpyruvyl-6-hydroxy-3-cyclohexene-1-carboxylate synthase"/>
    <property type="match status" value="1"/>
</dbReference>
<dbReference type="Gene3D" id="3.40.50.970">
    <property type="match status" value="2"/>
</dbReference>
<dbReference type="Gene3D" id="3.40.50.1220">
    <property type="entry name" value="TPP-binding domain"/>
    <property type="match status" value="1"/>
</dbReference>
<dbReference type="HAMAP" id="MF_01659">
    <property type="entry name" value="MenD"/>
    <property type="match status" value="1"/>
</dbReference>
<dbReference type="InterPro" id="IPR004433">
    <property type="entry name" value="MenaQ_synth_MenD"/>
</dbReference>
<dbReference type="InterPro" id="IPR029061">
    <property type="entry name" value="THDP-binding"/>
</dbReference>
<dbReference type="InterPro" id="IPR012001">
    <property type="entry name" value="Thiamin_PyroP_enz_TPP-bd_dom"/>
</dbReference>
<dbReference type="NCBIfam" id="TIGR00173">
    <property type="entry name" value="menD"/>
    <property type="match status" value="1"/>
</dbReference>
<dbReference type="PANTHER" id="PTHR42916">
    <property type="entry name" value="2-SUCCINYL-5-ENOLPYRUVYL-6-HYDROXY-3-CYCLOHEXENE-1-CARBOXYLATE SYNTHASE"/>
    <property type="match status" value="1"/>
</dbReference>
<dbReference type="PANTHER" id="PTHR42916:SF1">
    <property type="entry name" value="PROTEIN PHYLLO, CHLOROPLASTIC"/>
    <property type="match status" value="1"/>
</dbReference>
<dbReference type="Pfam" id="PF02776">
    <property type="entry name" value="TPP_enzyme_N"/>
    <property type="match status" value="1"/>
</dbReference>
<dbReference type="PIRSF" id="PIRSF004983">
    <property type="entry name" value="MenD"/>
    <property type="match status" value="1"/>
</dbReference>
<dbReference type="SUPFAM" id="SSF52518">
    <property type="entry name" value="Thiamin diphosphate-binding fold (THDP-binding)"/>
    <property type="match status" value="2"/>
</dbReference>
<gene>
    <name evidence="1" type="primary">menD</name>
    <name type="ordered locus">MAP_4052</name>
</gene>
<comment type="function">
    <text evidence="1">Catalyzes the thiamine diphosphate-dependent decarboxylation of 2-oxoglutarate and the subsequent addition of the resulting succinic semialdehyde-thiamine pyrophosphate anion to isochorismate to yield 2-succinyl-5-enolpyruvyl-6-hydroxy-3-cyclohexene-1-carboxylate (SEPHCHC).</text>
</comment>
<comment type="catalytic activity">
    <reaction evidence="1">
        <text>isochorismate + 2-oxoglutarate + H(+) = 5-enolpyruvoyl-6-hydroxy-2-succinyl-cyclohex-3-ene-1-carboxylate + CO2</text>
        <dbReference type="Rhea" id="RHEA:25593"/>
        <dbReference type="ChEBI" id="CHEBI:15378"/>
        <dbReference type="ChEBI" id="CHEBI:16526"/>
        <dbReference type="ChEBI" id="CHEBI:16810"/>
        <dbReference type="ChEBI" id="CHEBI:29780"/>
        <dbReference type="ChEBI" id="CHEBI:58818"/>
        <dbReference type="EC" id="2.2.1.9"/>
    </reaction>
</comment>
<comment type="cofactor">
    <cofactor evidence="1">
        <name>Mg(2+)</name>
        <dbReference type="ChEBI" id="CHEBI:18420"/>
    </cofactor>
    <cofactor evidence="1">
        <name>Mn(2+)</name>
        <dbReference type="ChEBI" id="CHEBI:29035"/>
    </cofactor>
</comment>
<comment type="cofactor">
    <cofactor evidence="1">
        <name>thiamine diphosphate</name>
        <dbReference type="ChEBI" id="CHEBI:58937"/>
    </cofactor>
    <text evidence="1">Binds 1 thiamine pyrophosphate per subunit.</text>
</comment>
<comment type="pathway">
    <text evidence="1">Quinol/quinone metabolism; 1,4-dihydroxy-2-naphthoate biosynthesis; 1,4-dihydroxy-2-naphthoate from chorismate: step 2/7.</text>
</comment>
<comment type="pathway">
    <text evidence="1">Quinol/quinone metabolism; menaquinone biosynthesis.</text>
</comment>
<comment type="subunit">
    <text evidence="1">Homodimer.</text>
</comment>
<comment type="similarity">
    <text evidence="1">Belongs to the TPP enzyme family. MenD subfamily.</text>
</comment>
<organism>
    <name type="scientific">Mycolicibacterium paratuberculosis (strain ATCC BAA-968 / K-10)</name>
    <name type="common">Mycobacterium paratuberculosis</name>
    <dbReference type="NCBI Taxonomy" id="262316"/>
    <lineage>
        <taxon>Bacteria</taxon>
        <taxon>Bacillati</taxon>
        <taxon>Actinomycetota</taxon>
        <taxon>Actinomycetes</taxon>
        <taxon>Mycobacteriales</taxon>
        <taxon>Mycobacteriaceae</taxon>
        <taxon>Mycobacterium</taxon>
        <taxon>Mycobacterium avium complex (MAC)</taxon>
    </lineage>
</organism>